<dbReference type="EMBL" id="AL365181">
    <property type="status" value="NOT_ANNOTATED_CDS"/>
    <property type="molecule type" value="Genomic_DNA"/>
</dbReference>
<dbReference type="CCDS" id="CCDS53379.1"/>
<dbReference type="RefSeq" id="NP_001099139.2">
    <property type="nucleotide sequence ID" value="NM_001105669.4"/>
</dbReference>
<dbReference type="SMR" id="A2A3L6"/>
<dbReference type="BioGRID" id="127888">
    <property type="interactions" value="1"/>
</dbReference>
<dbReference type="FunCoup" id="A2A3L6">
    <property type="interactions" value="1"/>
</dbReference>
<dbReference type="IntAct" id="A2A3L6">
    <property type="interactions" value="1"/>
</dbReference>
<dbReference type="STRING" id="9606.ENSP00000357219"/>
<dbReference type="GlyGen" id="A2A3L6">
    <property type="glycosylation" value="1 site, 1 O-linked glycan (1 site)"/>
</dbReference>
<dbReference type="iPTMnet" id="A2A3L6"/>
<dbReference type="PhosphoSitePlus" id="A2A3L6"/>
<dbReference type="BioMuta" id="TTC24"/>
<dbReference type="MassIVE" id="A2A3L6"/>
<dbReference type="PaxDb" id="9606-ENSP00000357219"/>
<dbReference type="PeptideAtlas" id="A2A3L6"/>
<dbReference type="ProteomicsDB" id="285"/>
<dbReference type="Antibodypedia" id="34219">
    <property type="antibodies" value="33 antibodies from 10 providers"/>
</dbReference>
<dbReference type="DNASU" id="164118"/>
<dbReference type="Ensembl" id="ENST00000368236.8">
    <property type="protein sequence ID" value="ENSP00000357219.3"/>
    <property type="gene ID" value="ENSG00000187862.13"/>
</dbReference>
<dbReference type="Ensembl" id="ENST00000708590.1">
    <property type="protein sequence ID" value="ENSP00000517290.1"/>
    <property type="gene ID" value="ENSG00000291760.1"/>
</dbReference>
<dbReference type="GeneID" id="164118"/>
<dbReference type="KEGG" id="hsa:164118"/>
<dbReference type="MANE-Select" id="ENST00000368236.8">
    <property type="protein sequence ID" value="ENSP00000357219.3"/>
    <property type="RefSeq nucleotide sequence ID" value="NM_001105669.4"/>
    <property type="RefSeq protein sequence ID" value="NP_001099139.2"/>
</dbReference>
<dbReference type="UCSC" id="uc021pbf.1">
    <property type="organism name" value="human"/>
</dbReference>
<dbReference type="AGR" id="HGNC:32348"/>
<dbReference type="CTD" id="164118"/>
<dbReference type="GeneCards" id="TTC24"/>
<dbReference type="HGNC" id="HGNC:32348">
    <property type="gene designation" value="TTC24"/>
</dbReference>
<dbReference type="HPA" id="ENSG00000187862">
    <property type="expression patterns" value="Tissue enriched (lymphoid)"/>
</dbReference>
<dbReference type="neXtProt" id="NX_A2A3L6"/>
<dbReference type="OpenTargets" id="ENSG00000187862"/>
<dbReference type="PharmGKB" id="PA142670676"/>
<dbReference type="VEuPathDB" id="HostDB:ENSG00000187862"/>
<dbReference type="eggNOG" id="KOG1124">
    <property type="taxonomic scope" value="Eukaryota"/>
</dbReference>
<dbReference type="GeneTree" id="ENSGT00730000111346"/>
<dbReference type="HOGENOM" id="CLU_033633_1_0_1"/>
<dbReference type="InParanoid" id="A2A3L6"/>
<dbReference type="OMA" id="ASSCPMF"/>
<dbReference type="OrthoDB" id="9991614at2759"/>
<dbReference type="PAN-GO" id="A2A3L6">
    <property type="GO annotations" value="0 GO annotations based on evolutionary models"/>
</dbReference>
<dbReference type="PhylomeDB" id="A2A3L6"/>
<dbReference type="TreeFam" id="TF328344"/>
<dbReference type="PathwayCommons" id="A2A3L6"/>
<dbReference type="SignaLink" id="A2A3L6"/>
<dbReference type="BioGRID-ORCS" id="164118">
    <property type="hits" value="16 hits in 1144 CRISPR screens"/>
</dbReference>
<dbReference type="GenomeRNAi" id="164118"/>
<dbReference type="Pharos" id="A2A3L6">
    <property type="development level" value="Tdark"/>
</dbReference>
<dbReference type="PRO" id="PR:A2A3L6"/>
<dbReference type="Proteomes" id="UP000005640">
    <property type="component" value="Chromosome 1"/>
</dbReference>
<dbReference type="RNAct" id="A2A3L6">
    <property type="molecule type" value="protein"/>
</dbReference>
<dbReference type="Bgee" id="ENSG00000187862">
    <property type="expression patterns" value="Expressed in granulocyte and 79 other cell types or tissues"/>
</dbReference>
<dbReference type="Gene3D" id="1.25.40.10">
    <property type="entry name" value="Tetratricopeptide repeat domain"/>
    <property type="match status" value="2"/>
</dbReference>
<dbReference type="InterPro" id="IPR011990">
    <property type="entry name" value="TPR-like_helical_dom_sf"/>
</dbReference>
<dbReference type="InterPro" id="IPR024812">
    <property type="entry name" value="TPR_24"/>
</dbReference>
<dbReference type="InterPro" id="IPR019734">
    <property type="entry name" value="TPR_rpt"/>
</dbReference>
<dbReference type="PANTHER" id="PTHR47050">
    <property type="entry name" value="TETRATRICOPEPTIDE REPEAT PROTEIN 24"/>
    <property type="match status" value="1"/>
</dbReference>
<dbReference type="PANTHER" id="PTHR47050:SF2">
    <property type="entry name" value="TETRATRICOPEPTIDE REPEAT PROTEIN 24"/>
    <property type="match status" value="1"/>
</dbReference>
<dbReference type="Pfam" id="PF13424">
    <property type="entry name" value="TPR_12"/>
    <property type="match status" value="1"/>
</dbReference>
<dbReference type="Pfam" id="PF13176">
    <property type="entry name" value="TPR_7"/>
    <property type="match status" value="1"/>
</dbReference>
<dbReference type="SMART" id="SM00028">
    <property type="entry name" value="TPR"/>
    <property type="match status" value="7"/>
</dbReference>
<dbReference type="SUPFAM" id="SSF48452">
    <property type="entry name" value="TPR-like"/>
    <property type="match status" value="3"/>
</dbReference>
<dbReference type="PROSITE" id="PS50005">
    <property type="entry name" value="TPR"/>
    <property type="match status" value="7"/>
</dbReference>
<dbReference type="PROSITE" id="PS50293">
    <property type="entry name" value="TPR_REGION"/>
    <property type="match status" value="1"/>
</dbReference>
<keyword id="KW-1267">Proteomics identification</keyword>
<keyword id="KW-1185">Reference proteome</keyword>
<keyword id="KW-0677">Repeat</keyword>
<keyword id="KW-0802">TPR repeat</keyword>
<sequence length="582" mass="63396">MSSPNPEDVPRRPEPEPSSSNKKKKKRKWLRQEASIQALTRAGHGALQAGQNHEALNNFQRAFLLASKAPQTRDTPVLQACAFNLGAAYVETGDPARGLELLLRAHPEEKAQGRRHGDQCFNVALAYHALGELPQALAWYHRALGHYQPQGDQGEAWAKMGACYQALGQPELAAHCLQEASQAYAQERQLRAAALALGAAAGCMLKSGRHRVGEVVQVLEKSRRLAERSTERRLLGHLYNDLGLGYSQLQLFPLAVEAFLQALPLCWVPGEQATVLRNLGMAHNALGNYQEAREFHQKAADLHGSVGQRWEQGRSFGSLAFALSQLGDHKAARDNYLHALQAARDSGDMKGQWQACEGLGAAAARLGQYDQALKYYKEALAQCQKEPDSVRERLVAKLADTVRTRLAQVGLVQTHTLTSAPGRLQAPGGASQAEGTPAKAGSSTAGVQHRSSSGWEDEEFEEGHQKKKEERSANVPVRAGPGRPELCFLPGTVNHSHHLASSCPTFTKHTPCRGTVLGKASIYSPGPRAHLPFVGPGPPRAEYPSILVPNGPQANRSSRWPRESLSRSRQRRPMESGICTIV</sequence>
<accession>A2A3L6</accession>
<accession>Q5T3H7</accession>
<evidence type="ECO:0000256" key="1">
    <source>
        <dbReference type="SAM" id="MobiDB-lite"/>
    </source>
</evidence>
<feature type="chain" id="PRO_0000307771" description="Tetratricopeptide repeat protein 24">
    <location>
        <begin position="1"/>
        <end position="582"/>
    </location>
</feature>
<feature type="repeat" description="TPR 1">
    <location>
        <begin position="36"/>
        <end position="69"/>
    </location>
</feature>
<feature type="repeat" description="TPR 2">
    <location>
        <begin position="79"/>
        <end position="112"/>
    </location>
</feature>
<feature type="repeat" description="TPR 3">
    <location>
        <begin position="117"/>
        <end position="150"/>
    </location>
</feature>
<feature type="repeat" description="TPR 4">
    <location>
        <begin position="154"/>
        <end position="187"/>
    </location>
</feature>
<feature type="repeat" description="TPR 5">
    <location>
        <begin position="236"/>
        <end position="271"/>
    </location>
</feature>
<feature type="repeat" description="TPR 6">
    <location>
        <begin position="273"/>
        <end position="306"/>
    </location>
</feature>
<feature type="repeat" description="TPR 7">
    <location>
        <begin position="313"/>
        <end position="346"/>
    </location>
</feature>
<feature type="repeat" description="TPR 8">
    <location>
        <begin position="353"/>
        <end position="386"/>
    </location>
</feature>
<feature type="region of interest" description="Disordered" evidence="1">
    <location>
        <begin position="1"/>
        <end position="31"/>
    </location>
</feature>
<feature type="region of interest" description="Disordered" evidence="1">
    <location>
        <begin position="418"/>
        <end position="481"/>
    </location>
</feature>
<feature type="region of interest" description="Disordered" evidence="1">
    <location>
        <begin position="548"/>
        <end position="582"/>
    </location>
</feature>
<feature type="compositionally biased region" description="Polar residues" evidence="1">
    <location>
        <begin position="441"/>
        <end position="454"/>
    </location>
</feature>
<feature type="compositionally biased region" description="Basic and acidic residues" evidence="1">
    <location>
        <begin position="462"/>
        <end position="472"/>
    </location>
</feature>
<feature type="sequence variant" id="VAR_036643" description="In dbSNP:rs6682716.">
    <original>E</original>
    <variation>G</variation>
    <location>
        <position position="231"/>
    </location>
</feature>
<feature type="sequence variant" id="VAR_036644" description="In dbSNP:rs17392348.">
    <original>P</original>
    <variation>A</variation>
    <location>
        <position position="532"/>
    </location>
</feature>
<feature type="sequence variant" id="VAR_036645" description="In dbSNP:rs12090808.">
    <original>N</original>
    <variation>S</variation>
    <location>
        <position position="550"/>
    </location>
</feature>
<reference key="1">
    <citation type="journal article" date="2006" name="Nature">
        <title>The DNA sequence and biological annotation of human chromosome 1.</title>
        <authorList>
            <person name="Gregory S.G."/>
            <person name="Barlow K.F."/>
            <person name="McLay K.E."/>
            <person name="Kaul R."/>
            <person name="Swarbreck D."/>
            <person name="Dunham A."/>
            <person name="Scott C.E."/>
            <person name="Howe K.L."/>
            <person name="Woodfine K."/>
            <person name="Spencer C.C.A."/>
            <person name="Jones M.C."/>
            <person name="Gillson C."/>
            <person name="Searle S."/>
            <person name="Zhou Y."/>
            <person name="Kokocinski F."/>
            <person name="McDonald L."/>
            <person name="Evans R."/>
            <person name="Phillips K."/>
            <person name="Atkinson A."/>
            <person name="Cooper R."/>
            <person name="Jones C."/>
            <person name="Hall R.E."/>
            <person name="Andrews T.D."/>
            <person name="Lloyd C."/>
            <person name="Ainscough R."/>
            <person name="Almeida J.P."/>
            <person name="Ambrose K.D."/>
            <person name="Anderson F."/>
            <person name="Andrew R.W."/>
            <person name="Ashwell R.I.S."/>
            <person name="Aubin K."/>
            <person name="Babbage A.K."/>
            <person name="Bagguley C.L."/>
            <person name="Bailey J."/>
            <person name="Beasley H."/>
            <person name="Bethel G."/>
            <person name="Bird C.P."/>
            <person name="Bray-Allen S."/>
            <person name="Brown J.Y."/>
            <person name="Brown A.J."/>
            <person name="Buckley D."/>
            <person name="Burton J."/>
            <person name="Bye J."/>
            <person name="Carder C."/>
            <person name="Chapman J.C."/>
            <person name="Clark S.Y."/>
            <person name="Clarke G."/>
            <person name="Clee C."/>
            <person name="Cobley V."/>
            <person name="Collier R.E."/>
            <person name="Corby N."/>
            <person name="Coville G.J."/>
            <person name="Davies J."/>
            <person name="Deadman R."/>
            <person name="Dunn M."/>
            <person name="Earthrowl M."/>
            <person name="Ellington A.G."/>
            <person name="Errington H."/>
            <person name="Frankish A."/>
            <person name="Frankland J."/>
            <person name="French L."/>
            <person name="Garner P."/>
            <person name="Garnett J."/>
            <person name="Gay L."/>
            <person name="Ghori M.R.J."/>
            <person name="Gibson R."/>
            <person name="Gilby L.M."/>
            <person name="Gillett W."/>
            <person name="Glithero R.J."/>
            <person name="Grafham D.V."/>
            <person name="Griffiths C."/>
            <person name="Griffiths-Jones S."/>
            <person name="Grocock R."/>
            <person name="Hammond S."/>
            <person name="Harrison E.S.I."/>
            <person name="Hart E."/>
            <person name="Haugen E."/>
            <person name="Heath P.D."/>
            <person name="Holmes S."/>
            <person name="Holt K."/>
            <person name="Howden P.J."/>
            <person name="Hunt A.R."/>
            <person name="Hunt S.E."/>
            <person name="Hunter G."/>
            <person name="Isherwood J."/>
            <person name="James R."/>
            <person name="Johnson C."/>
            <person name="Johnson D."/>
            <person name="Joy A."/>
            <person name="Kay M."/>
            <person name="Kershaw J.K."/>
            <person name="Kibukawa M."/>
            <person name="Kimberley A.M."/>
            <person name="King A."/>
            <person name="Knights A.J."/>
            <person name="Lad H."/>
            <person name="Laird G."/>
            <person name="Lawlor S."/>
            <person name="Leongamornlert D.A."/>
            <person name="Lloyd D.M."/>
            <person name="Loveland J."/>
            <person name="Lovell J."/>
            <person name="Lush M.J."/>
            <person name="Lyne R."/>
            <person name="Martin S."/>
            <person name="Mashreghi-Mohammadi M."/>
            <person name="Matthews L."/>
            <person name="Matthews N.S.W."/>
            <person name="McLaren S."/>
            <person name="Milne S."/>
            <person name="Mistry S."/>
            <person name="Moore M.J.F."/>
            <person name="Nickerson T."/>
            <person name="O'Dell C.N."/>
            <person name="Oliver K."/>
            <person name="Palmeiri A."/>
            <person name="Palmer S.A."/>
            <person name="Parker A."/>
            <person name="Patel D."/>
            <person name="Pearce A.V."/>
            <person name="Peck A.I."/>
            <person name="Pelan S."/>
            <person name="Phelps K."/>
            <person name="Phillimore B.J."/>
            <person name="Plumb R."/>
            <person name="Rajan J."/>
            <person name="Raymond C."/>
            <person name="Rouse G."/>
            <person name="Saenphimmachak C."/>
            <person name="Sehra H.K."/>
            <person name="Sheridan E."/>
            <person name="Shownkeen R."/>
            <person name="Sims S."/>
            <person name="Skuce C.D."/>
            <person name="Smith M."/>
            <person name="Steward C."/>
            <person name="Subramanian S."/>
            <person name="Sycamore N."/>
            <person name="Tracey A."/>
            <person name="Tromans A."/>
            <person name="Van Helmond Z."/>
            <person name="Wall M."/>
            <person name="Wallis J.M."/>
            <person name="White S."/>
            <person name="Whitehead S.L."/>
            <person name="Wilkinson J.E."/>
            <person name="Willey D.L."/>
            <person name="Williams H."/>
            <person name="Wilming L."/>
            <person name="Wray P.W."/>
            <person name="Wu Z."/>
            <person name="Coulson A."/>
            <person name="Vaudin M."/>
            <person name="Sulston J.E."/>
            <person name="Durbin R.M."/>
            <person name="Hubbard T."/>
            <person name="Wooster R."/>
            <person name="Dunham I."/>
            <person name="Carter N.P."/>
            <person name="McVean G."/>
            <person name="Ross M.T."/>
            <person name="Harrow J."/>
            <person name="Olson M.V."/>
            <person name="Beck S."/>
            <person name="Rogers J."/>
            <person name="Bentley D.R."/>
        </authorList>
    </citation>
    <scope>NUCLEOTIDE SEQUENCE [LARGE SCALE GENOMIC DNA]</scope>
</reference>
<protein>
    <recommendedName>
        <fullName>Tetratricopeptide repeat protein 24</fullName>
        <shortName>TPR repeat protein 24</shortName>
    </recommendedName>
</protein>
<proteinExistence type="evidence at protein level"/>
<gene>
    <name type="primary">TTC24</name>
</gene>
<organism>
    <name type="scientific">Homo sapiens</name>
    <name type="common">Human</name>
    <dbReference type="NCBI Taxonomy" id="9606"/>
    <lineage>
        <taxon>Eukaryota</taxon>
        <taxon>Metazoa</taxon>
        <taxon>Chordata</taxon>
        <taxon>Craniata</taxon>
        <taxon>Vertebrata</taxon>
        <taxon>Euteleostomi</taxon>
        <taxon>Mammalia</taxon>
        <taxon>Eutheria</taxon>
        <taxon>Euarchontoglires</taxon>
        <taxon>Primates</taxon>
        <taxon>Haplorrhini</taxon>
        <taxon>Catarrhini</taxon>
        <taxon>Hominidae</taxon>
        <taxon>Homo</taxon>
    </lineage>
</organism>
<name>TTC24_HUMAN</name>